<organism>
    <name type="scientific">Rickettsia peacockii (strain Rustic)</name>
    <dbReference type="NCBI Taxonomy" id="562019"/>
    <lineage>
        <taxon>Bacteria</taxon>
        <taxon>Pseudomonadati</taxon>
        <taxon>Pseudomonadota</taxon>
        <taxon>Alphaproteobacteria</taxon>
        <taxon>Rickettsiales</taxon>
        <taxon>Rickettsiaceae</taxon>
        <taxon>Rickettsieae</taxon>
        <taxon>Rickettsia</taxon>
        <taxon>spotted fever group</taxon>
    </lineage>
</organism>
<comment type="function">
    <text evidence="1">One of two assembly initiator proteins, it binds directly to the 5'-end of the 23S rRNA, where it nucleates assembly of the 50S subunit.</text>
</comment>
<comment type="function">
    <text evidence="1">One of the proteins that surrounds the polypeptide exit tunnel on the outside of the subunit.</text>
</comment>
<comment type="subunit">
    <text evidence="1">Part of the 50S ribosomal subunit.</text>
</comment>
<comment type="similarity">
    <text evidence="1">Belongs to the universal ribosomal protein uL24 family.</text>
</comment>
<evidence type="ECO:0000255" key="1">
    <source>
        <dbReference type="HAMAP-Rule" id="MF_01326"/>
    </source>
</evidence>
<evidence type="ECO:0000305" key="2"/>
<dbReference type="EMBL" id="CP001227">
    <property type="protein sequence ID" value="ACR47765.1"/>
    <property type="molecule type" value="Genomic_DNA"/>
</dbReference>
<dbReference type="RefSeq" id="WP_004997814.1">
    <property type="nucleotide sequence ID" value="NC_012730.1"/>
</dbReference>
<dbReference type="SMR" id="C4K2G8"/>
<dbReference type="GeneID" id="95361475"/>
<dbReference type="KEGG" id="rpk:RPR_06175"/>
<dbReference type="HOGENOM" id="CLU_093315_2_0_5"/>
<dbReference type="Proteomes" id="UP000005015">
    <property type="component" value="Chromosome"/>
</dbReference>
<dbReference type="GO" id="GO:1990904">
    <property type="term" value="C:ribonucleoprotein complex"/>
    <property type="evidence" value="ECO:0007669"/>
    <property type="project" value="UniProtKB-KW"/>
</dbReference>
<dbReference type="GO" id="GO:0005840">
    <property type="term" value="C:ribosome"/>
    <property type="evidence" value="ECO:0007669"/>
    <property type="project" value="UniProtKB-KW"/>
</dbReference>
<dbReference type="GO" id="GO:0019843">
    <property type="term" value="F:rRNA binding"/>
    <property type="evidence" value="ECO:0007669"/>
    <property type="project" value="UniProtKB-UniRule"/>
</dbReference>
<dbReference type="GO" id="GO:0003735">
    <property type="term" value="F:structural constituent of ribosome"/>
    <property type="evidence" value="ECO:0007669"/>
    <property type="project" value="InterPro"/>
</dbReference>
<dbReference type="GO" id="GO:0006412">
    <property type="term" value="P:translation"/>
    <property type="evidence" value="ECO:0007669"/>
    <property type="project" value="UniProtKB-UniRule"/>
</dbReference>
<dbReference type="CDD" id="cd06089">
    <property type="entry name" value="KOW_RPL26"/>
    <property type="match status" value="1"/>
</dbReference>
<dbReference type="FunFam" id="2.30.30.30:FF:000004">
    <property type="entry name" value="50S ribosomal protein L24"/>
    <property type="match status" value="1"/>
</dbReference>
<dbReference type="Gene3D" id="2.30.30.30">
    <property type="match status" value="1"/>
</dbReference>
<dbReference type="HAMAP" id="MF_01326_B">
    <property type="entry name" value="Ribosomal_uL24_B"/>
    <property type="match status" value="1"/>
</dbReference>
<dbReference type="InterPro" id="IPR005824">
    <property type="entry name" value="KOW"/>
</dbReference>
<dbReference type="InterPro" id="IPR014722">
    <property type="entry name" value="Rib_uL2_dom2"/>
</dbReference>
<dbReference type="InterPro" id="IPR003256">
    <property type="entry name" value="Ribosomal_uL24"/>
</dbReference>
<dbReference type="InterPro" id="IPR005825">
    <property type="entry name" value="Ribosomal_uL24_CS"/>
</dbReference>
<dbReference type="InterPro" id="IPR041988">
    <property type="entry name" value="Ribosomal_uL24_KOW"/>
</dbReference>
<dbReference type="InterPro" id="IPR008991">
    <property type="entry name" value="Translation_prot_SH3-like_sf"/>
</dbReference>
<dbReference type="NCBIfam" id="TIGR01079">
    <property type="entry name" value="rplX_bact"/>
    <property type="match status" value="1"/>
</dbReference>
<dbReference type="PANTHER" id="PTHR12903">
    <property type="entry name" value="MITOCHONDRIAL RIBOSOMAL PROTEIN L24"/>
    <property type="match status" value="1"/>
</dbReference>
<dbReference type="Pfam" id="PF00467">
    <property type="entry name" value="KOW"/>
    <property type="match status" value="1"/>
</dbReference>
<dbReference type="Pfam" id="PF17136">
    <property type="entry name" value="ribosomal_L24"/>
    <property type="match status" value="1"/>
</dbReference>
<dbReference type="SMART" id="SM00739">
    <property type="entry name" value="KOW"/>
    <property type="match status" value="1"/>
</dbReference>
<dbReference type="SUPFAM" id="SSF50104">
    <property type="entry name" value="Translation proteins SH3-like domain"/>
    <property type="match status" value="1"/>
</dbReference>
<dbReference type="PROSITE" id="PS01108">
    <property type="entry name" value="RIBOSOMAL_L24"/>
    <property type="match status" value="1"/>
</dbReference>
<sequence>MIKLKVKKGDEVVVITGKHKGKKGKILKVFPEDSKVIVSGVNVVKKHTKSNQMSEGGIITKELPIHISNIAHIDPKTGNPTKVAFKFLEDGSKVRVAKKSGEIIGKEGK</sequence>
<accession>C4K2G8</accession>
<proteinExistence type="inferred from homology"/>
<reference key="1">
    <citation type="journal article" date="2009" name="PLoS ONE">
        <title>Genome sequence of the endosymbiont Rickettsia peacockii and comparison with virulent Rickettsia rickettsii: identification of virulence factors.</title>
        <authorList>
            <person name="Felsheim R.F."/>
            <person name="Kurtti T.J."/>
            <person name="Munderloh U.G."/>
        </authorList>
    </citation>
    <scope>NUCLEOTIDE SEQUENCE [LARGE SCALE GENOMIC DNA]</scope>
    <source>
        <strain>Rustic</strain>
    </source>
</reference>
<protein>
    <recommendedName>
        <fullName evidence="1">Large ribosomal subunit protein uL24</fullName>
    </recommendedName>
    <alternativeName>
        <fullName evidence="2">50S ribosomal protein L24</fullName>
    </alternativeName>
</protein>
<name>RL24_RICPU</name>
<feature type="chain" id="PRO_1000214555" description="Large ribosomal subunit protein uL24">
    <location>
        <begin position="1"/>
        <end position="109"/>
    </location>
</feature>
<keyword id="KW-0687">Ribonucleoprotein</keyword>
<keyword id="KW-0689">Ribosomal protein</keyword>
<keyword id="KW-0694">RNA-binding</keyword>
<keyword id="KW-0699">rRNA-binding</keyword>
<gene>
    <name evidence="1" type="primary">rplX</name>
    <name type="ordered locus">RPR_06175</name>
</gene>